<protein>
    <recommendedName>
        <fullName evidence="1">Acetaldehyde dehydrogenase</fullName>
        <ecNumber evidence="1">1.2.1.10</ecNumber>
    </recommendedName>
    <alternativeName>
        <fullName evidence="1">Acetaldehyde dehydrogenase [acetylating]</fullName>
    </alternativeName>
</protein>
<accession>B1KJL0</accession>
<comment type="catalytic activity">
    <reaction evidence="1">
        <text>acetaldehyde + NAD(+) + CoA = acetyl-CoA + NADH + H(+)</text>
        <dbReference type="Rhea" id="RHEA:23288"/>
        <dbReference type="ChEBI" id="CHEBI:15343"/>
        <dbReference type="ChEBI" id="CHEBI:15378"/>
        <dbReference type="ChEBI" id="CHEBI:57287"/>
        <dbReference type="ChEBI" id="CHEBI:57288"/>
        <dbReference type="ChEBI" id="CHEBI:57540"/>
        <dbReference type="ChEBI" id="CHEBI:57945"/>
        <dbReference type="EC" id="1.2.1.10"/>
    </reaction>
</comment>
<comment type="similarity">
    <text evidence="1">Belongs to the acetaldehyde dehydrogenase family.</text>
</comment>
<comment type="sequence caution" evidence="2">
    <conflict type="erroneous initiation">
        <sequence resource="EMBL-CDS" id="ACA85683"/>
    </conflict>
</comment>
<evidence type="ECO:0000255" key="1">
    <source>
        <dbReference type="HAMAP-Rule" id="MF_01657"/>
    </source>
</evidence>
<evidence type="ECO:0000305" key="2"/>
<reference key="1">
    <citation type="submission" date="2008-02" db="EMBL/GenBank/DDBJ databases">
        <title>Complete sequence of Shewanella woodyi ATCC 51908.</title>
        <authorList>
            <consortium name="US DOE Joint Genome Institute"/>
            <person name="Copeland A."/>
            <person name="Lucas S."/>
            <person name="Lapidus A."/>
            <person name="Glavina del Rio T."/>
            <person name="Dalin E."/>
            <person name="Tice H."/>
            <person name="Bruce D."/>
            <person name="Goodwin L."/>
            <person name="Pitluck S."/>
            <person name="Sims D."/>
            <person name="Brettin T."/>
            <person name="Detter J.C."/>
            <person name="Han C."/>
            <person name="Kuske C.R."/>
            <person name="Schmutz J."/>
            <person name="Larimer F."/>
            <person name="Land M."/>
            <person name="Hauser L."/>
            <person name="Kyrpides N."/>
            <person name="Lykidis A."/>
            <person name="Zhao J.-S."/>
            <person name="Richardson P."/>
        </authorList>
    </citation>
    <scope>NUCLEOTIDE SEQUENCE [LARGE SCALE GENOMIC DNA]</scope>
    <source>
        <strain>ATCC 51908 / MS32</strain>
    </source>
</reference>
<sequence length="315" mass="33801">MVNKKINIALIGSGNIGTDLMIKALRSSTLNPVWMVGIDENSDGLKRAKALGLKTTHLGIDELLTHIEADNIQIAFDATSAYVHEENNRKLQSKGVKVIDLTPAAIGPYCIPPVNLESLLSQTENQTQINDGSISGNLNMVTCGGQATIPIIAAISRVQSVDYGEIVATIASKSAGPGTRKNIDEFTRTTADAIEQIGGARQGKAIIVMNPAEPPLMMRDTVHCLTQDEPDVEAITASVLSMIEQVQEYVPGYRLKNGPVFDGNRVSVFLEVAGLGDYLPEYAGNLDIMTSAALCTGEMLARNLRSNMSVKDSHH</sequence>
<dbReference type="EC" id="1.2.1.10" evidence="1"/>
<dbReference type="EMBL" id="CP000961">
    <property type="protein sequence ID" value="ACA85683.1"/>
    <property type="status" value="ALT_INIT"/>
    <property type="molecule type" value="Genomic_DNA"/>
</dbReference>
<dbReference type="RefSeq" id="WP_407636067.1">
    <property type="nucleotide sequence ID" value="NC_010506.1"/>
</dbReference>
<dbReference type="SMR" id="B1KJL0"/>
<dbReference type="STRING" id="392500.Swoo_1391"/>
<dbReference type="KEGG" id="swd:Swoo_1391"/>
<dbReference type="eggNOG" id="COG4569">
    <property type="taxonomic scope" value="Bacteria"/>
</dbReference>
<dbReference type="HOGENOM" id="CLU_062208_0_0_6"/>
<dbReference type="Proteomes" id="UP000002168">
    <property type="component" value="Chromosome"/>
</dbReference>
<dbReference type="GO" id="GO:0008774">
    <property type="term" value="F:acetaldehyde dehydrogenase (acetylating) activity"/>
    <property type="evidence" value="ECO:0007669"/>
    <property type="project" value="UniProtKB-UniRule"/>
</dbReference>
<dbReference type="GO" id="GO:0051287">
    <property type="term" value="F:NAD binding"/>
    <property type="evidence" value="ECO:0007669"/>
    <property type="project" value="UniProtKB-UniRule"/>
</dbReference>
<dbReference type="GO" id="GO:0009056">
    <property type="term" value="P:catabolic process"/>
    <property type="evidence" value="ECO:0007669"/>
    <property type="project" value="UniProtKB-KW"/>
</dbReference>
<dbReference type="CDD" id="cd23933">
    <property type="entry name" value="ALDH_C"/>
    <property type="match status" value="1"/>
</dbReference>
<dbReference type="Gene3D" id="3.30.360.10">
    <property type="entry name" value="Dihydrodipicolinate Reductase, domain 2"/>
    <property type="match status" value="1"/>
</dbReference>
<dbReference type="Gene3D" id="3.40.50.720">
    <property type="entry name" value="NAD(P)-binding Rossmann-like Domain"/>
    <property type="match status" value="1"/>
</dbReference>
<dbReference type="HAMAP" id="MF_01657">
    <property type="entry name" value="Ac_ald_DH_ac"/>
    <property type="match status" value="1"/>
</dbReference>
<dbReference type="InterPro" id="IPR003361">
    <property type="entry name" value="Acetaldehyde_dehydrogenase"/>
</dbReference>
<dbReference type="InterPro" id="IPR015426">
    <property type="entry name" value="Acetylaldehyde_DH_C"/>
</dbReference>
<dbReference type="InterPro" id="IPR036291">
    <property type="entry name" value="NAD(P)-bd_dom_sf"/>
</dbReference>
<dbReference type="InterPro" id="IPR000534">
    <property type="entry name" value="Semialdehyde_DH_NAD-bd"/>
</dbReference>
<dbReference type="NCBIfam" id="TIGR03215">
    <property type="entry name" value="ac_ald_DH_ac"/>
    <property type="match status" value="1"/>
</dbReference>
<dbReference type="NCBIfam" id="NF006157">
    <property type="entry name" value="PRK08300.1"/>
    <property type="match status" value="1"/>
</dbReference>
<dbReference type="Pfam" id="PF09290">
    <property type="entry name" value="AcetDehyd-dimer"/>
    <property type="match status" value="1"/>
</dbReference>
<dbReference type="Pfam" id="PF01118">
    <property type="entry name" value="Semialdhyde_dh"/>
    <property type="match status" value="1"/>
</dbReference>
<dbReference type="PIRSF" id="PIRSF015689">
    <property type="entry name" value="Actaldh_dh_actl"/>
    <property type="match status" value="1"/>
</dbReference>
<dbReference type="SMART" id="SM00859">
    <property type="entry name" value="Semialdhyde_dh"/>
    <property type="match status" value="1"/>
</dbReference>
<dbReference type="SUPFAM" id="SSF55347">
    <property type="entry name" value="Glyceraldehyde-3-phosphate dehydrogenase-like, C-terminal domain"/>
    <property type="match status" value="1"/>
</dbReference>
<dbReference type="SUPFAM" id="SSF51735">
    <property type="entry name" value="NAD(P)-binding Rossmann-fold domains"/>
    <property type="match status" value="1"/>
</dbReference>
<keyword id="KW-0058">Aromatic hydrocarbons catabolism</keyword>
<keyword id="KW-0520">NAD</keyword>
<keyword id="KW-0560">Oxidoreductase</keyword>
<keyword id="KW-1185">Reference proteome</keyword>
<gene>
    <name type="ordered locus">Swoo_1391</name>
</gene>
<feature type="chain" id="PRO_0000387741" description="Acetaldehyde dehydrogenase">
    <location>
        <begin position="1"/>
        <end position="315"/>
    </location>
</feature>
<feature type="active site" description="Acyl-thioester intermediate" evidence="1">
    <location>
        <position position="143"/>
    </location>
</feature>
<feature type="binding site" evidence="1">
    <location>
        <begin position="13"/>
        <end position="16"/>
    </location>
    <ligand>
        <name>NAD(+)</name>
        <dbReference type="ChEBI" id="CHEBI:57540"/>
    </ligand>
</feature>
<feature type="binding site" evidence="1">
    <location>
        <begin position="174"/>
        <end position="182"/>
    </location>
    <ligand>
        <name>NAD(+)</name>
        <dbReference type="ChEBI" id="CHEBI:57540"/>
    </ligand>
</feature>
<feature type="binding site" evidence="1">
    <location>
        <position position="285"/>
    </location>
    <ligand>
        <name>NAD(+)</name>
        <dbReference type="ChEBI" id="CHEBI:57540"/>
    </ligand>
</feature>
<name>ACDH_SHEWM</name>
<proteinExistence type="inferred from homology"/>
<organism>
    <name type="scientific">Shewanella woodyi (strain ATCC 51908 / MS32)</name>
    <dbReference type="NCBI Taxonomy" id="392500"/>
    <lineage>
        <taxon>Bacteria</taxon>
        <taxon>Pseudomonadati</taxon>
        <taxon>Pseudomonadota</taxon>
        <taxon>Gammaproteobacteria</taxon>
        <taxon>Alteromonadales</taxon>
        <taxon>Shewanellaceae</taxon>
        <taxon>Shewanella</taxon>
    </lineage>
</organism>